<keyword id="KW-0030">Aminoacyl-tRNA synthetase</keyword>
<keyword id="KW-0067">ATP-binding</keyword>
<keyword id="KW-0963">Cytoplasm</keyword>
<keyword id="KW-0436">Ligase</keyword>
<keyword id="KW-0547">Nucleotide-binding</keyword>
<keyword id="KW-0648">Protein biosynthesis</keyword>
<sequence>MTTQNFLVEIGTEELPPKALKTLATSFADNVEAELNQAGLSFDKIEWFAAPRRLAVKVLNLATQQPSKEIEKRGPAVSAAFDAEGKPTKAAEGWARGCGITVEQAERIATDKGEWLVHRTKIKGQPTKNLLNDIVANALAKLPIPKPMRWADKTVQFIRPVHTVTMLLGDELIEGEILGVASARTIRGHRFLGEKEFDIQHADQYPQLLRDKGSVVADFNERKAEILAKSQAKATALGGVADIEESLLEEVTSLVEYPNVLAAKFEERFLAVPAEALVYTMKGDQKYFPIYDKDGRLLPHFIFVSNINPEDPTAIIEGNEKVVRPRLTDAEFFFKTDLKQKLVDRLPRLETVLFQQQLGTLKDKTDRIEQLAGEIAKQIGADEAKAKRAGLLSKCDLMTNMVFEFTDTQGVMGMHYARHDGEDEEVAVALNEQYMPRFAGDELPKSLVASAVALADKFDTLTGIFGIGQAPKGSADPFALRRAALGALRIIVEKNLPLDLNDIISKAFDLYKELDNERLRNAPIAKTRGGFSEYPEGYVSFFTRGDDLVPKQKILDEVVDFMLGRFRAWYQDEGIAVDVIQAVLARRPTRPADFDARVRAVSHFRTLDSAEALAAANKRVSNILAKAGAAIGEINLTACVEPAEKALAEAVLALRTEVQPLIAQGDYTAVLDKLANLRAPVDSFFDNVMVNAEDPALRQNRLAILNTLQGLFLQVADISVLQ</sequence>
<accession>Q4QLY5</accession>
<name>SYGB_HAEI8</name>
<gene>
    <name evidence="1" type="primary">glyS</name>
    <name type="ordered locus">NTHI1093</name>
</gene>
<feature type="chain" id="PRO_1000006363" description="Glycine--tRNA ligase beta subunit">
    <location>
        <begin position="1"/>
        <end position="722"/>
    </location>
</feature>
<organism>
    <name type="scientific">Haemophilus influenzae (strain 86-028NP)</name>
    <dbReference type="NCBI Taxonomy" id="281310"/>
    <lineage>
        <taxon>Bacteria</taxon>
        <taxon>Pseudomonadati</taxon>
        <taxon>Pseudomonadota</taxon>
        <taxon>Gammaproteobacteria</taxon>
        <taxon>Pasteurellales</taxon>
        <taxon>Pasteurellaceae</taxon>
        <taxon>Haemophilus</taxon>
    </lineage>
</organism>
<evidence type="ECO:0000255" key="1">
    <source>
        <dbReference type="HAMAP-Rule" id="MF_00255"/>
    </source>
</evidence>
<dbReference type="EC" id="6.1.1.14" evidence="1"/>
<dbReference type="EMBL" id="CP000057">
    <property type="protein sequence ID" value="AAX87962.1"/>
    <property type="molecule type" value="Genomic_DNA"/>
</dbReference>
<dbReference type="RefSeq" id="WP_011272293.1">
    <property type="nucleotide sequence ID" value="NC_007146.2"/>
</dbReference>
<dbReference type="SMR" id="Q4QLY5"/>
<dbReference type="KEGG" id="hit:NTHI1093"/>
<dbReference type="HOGENOM" id="CLU_007220_2_2_6"/>
<dbReference type="Proteomes" id="UP000002525">
    <property type="component" value="Chromosome"/>
</dbReference>
<dbReference type="GO" id="GO:0005829">
    <property type="term" value="C:cytosol"/>
    <property type="evidence" value="ECO:0007669"/>
    <property type="project" value="TreeGrafter"/>
</dbReference>
<dbReference type="GO" id="GO:0004814">
    <property type="term" value="F:arginine-tRNA ligase activity"/>
    <property type="evidence" value="ECO:0007669"/>
    <property type="project" value="InterPro"/>
</dbReference>
<dbReference type="GO" id="GO:0005524">
    <property type="term" value="F:ATP binding"/>
    <property type="evidence" value="ECO:0007669"/>
    <property type="project" value="UniProtKB-UniRule"/>
</dbReference>
<dbReference type="GO" id="GO:0004820">
    <property type="term" value="F:glycine-tRNA ligase activity"/>
    <property type="evidence" value="ECO:0007669"/>
    <property type="project" value="UniProtKB-UniRule"/>
</dbReference>
<dbReference type="GO" id="GO:0006420">
    <property type="term" value="P:arginyl-tRNA aminoacylation"/>
    <property type="evidence" value="ECO:0007669"/>
    <property type="project" value="InterPro"/>
</dbReference>
<dbReference type="GO" id="GO:0006426">
    <property type="term" value="P:glycyl-tRNA aminoacylation"/>
    <property type="evidence" value="ECO:0007669"/>
    <property type="project" value="UniProtKB-UniRule"/>
</dbReference>
<dbReference type="HAMAP" id="MF_00255">
    <property type="entry name" value="Gly_tRNA_synth_beta"/>
    <property type="match status" value="1"/>
</dbReference>
<dbReference type="InterPro" id="IPR008909">
    <property type="entry name" value="DALR_anticod-bd"/>
</dbReference>
<dbReference type="InterPro" id="IPR015944">
    <property type="entry name" value="Gly-tRNA-synth_bsu"/>
</dbReference>
<dbReference type="InterPro" id="IPR006194">
    <property type="entry name" value="Gly-tRNA-synth_heterodimer"/>
</dbReference>
<dbReference type="NCBIfam" id="TIGR00211">
    <property type="entry name" value="glyS"/>
    <property type="match status" value="1"/>
</dbReference>
<dbReference type="PANTHER" id="PTHR30075:SF2">
    <property type="entry name" value="GLYCINE--TRNA LIGASE, CHLOROPLASTIC_MITOCHONDRIAL 2"/>
    <property type="match status" value="1"/>
</dbReference>
<dbReference type="PANTHER" id="PTHR30075">
    <property type="entry name" value="GLYCYL-TRNA SYNTHETASE"/>
    <property type="match status" value="1"/>
</dbReference>
<dbReference type="Pfam" id="PF05746">
    <property type="entry name" value="DALR_1"/>
    <property type="match status" value="1"/>
</dbReference>
<dbReference type="Pfam" id="PF02092">
    <property type="entry name" value="tRNA_synt_2f"/>
    <property type="match status" value="1"/>
</dbReference>
<dbReference type="PRINTS" id="PR01045">
    <property type="entry name" value="TRNASYNTHGB"/>
</dbReference>
<dbReference type="SMART" id="SM00836">
    <property type="entry name" value="DALR_1"/>
    <property type="match status" value="1"/>
</dbReference>
<dbReference type="SUPFAM" id="SSF109604">
    <property type="entry name" value="HD-domain/PDEase-like"/>
    <property type="match status" value="1"/>
</dbReference>
<dbReference type="PROSITE" id="PS50861">
    <property type="entry name" value="AA_TRNA_LIGASE_II_GLYAB"/>
    <property type="match status" value="1"/>
</dbReference>
<reference key="1">
    <citation type="journal article" date="2005" name="J. Bacteriol.">
        <title>Genomic sequence of an otitis media isolate of nontypeable Haemophilus influenzae: comparative study with H. influenzae serotype d, strain KW20.</title>
        <authorList>
            <person name="Harrison A."/>
            <person name="Dyer D.W."/>
            <person name="Gillaspy A."/>
            <person name="Ray W.C."/>
            <person name="Mungur R."/>
            <person name="Carson M.B."/>
            <person name="Zhong H."/>
            <person name="Gipson J."/>
            <person name="Gipson M."/>
            <person name="Johnson L.S."/>
            <person name="Lewis L."/>
            <person name="Bakaletz L.O."/>
            <person name="Munson R.S. Jr."/>
        </authorList>
    </citation>
    <scope>NUCLEOTIDE SEQUENCE [LARGE SCALE GENOMIC DNA]</scope>
    <source>
        <strain>86-028NP</strain>
    </source>
</reference>
<comment type="catalytic activity">
    <reaction evidence="1">
        <text>tRNA(Gly) + glycine + ATP = glycyl-tRNA(Gly) + AMP + diphosphate</text>
        <dbReference type="Rhea" id="RHEA:16013"/>
        <dbReference type="Rhea" id="RHEA-COMP:9664"/>
        <dbReference type="Rhea" id="RHEA-COMP:9683"/>
        <dbReference type="ChEBI" id="CHEBI:30616"/>
        <dbReference type="ChEBI" id="CHEBI:33019"/>
        <dbReference type="ChEBI" id="CHEBI:57305"/>
        <dbReference type="ChEBI" id="CHEBI:78442"/>
        <dbReference type="ChEBI" id="CHEBI:78522"/>
        <dbReference type="ChEBI" id="CHEBI:456215"/>
        <dbReference type="EC" id="6.1.1.14"/>
    </reaction>
</comment>
<comment type="subunit">
    <text evidence="1">Tetramer of two alpha and two beta subunits.</text>
</comment>
<comment type="subcellular location">
    <subcellularLocation>
        <location evidence="1">Cytoplasm</location>
    </subcellularLocation>
</comment>
<comment type="similarity">
    <text evidence="1">Belongs to the class-II aminoacyl-tRNA synthetase family.</text>
</comment>
<proteinExistence type="inferred from homology"/>
<protein>
    <recommendedName>
        <fullName evidence="1">Glycine--tRNA ligase beta subunit</fullName>
        <ecNumber evidence="1">6.1.1.14</ecNumber>
    </recommendedName>
    <alternativeName>
        <fullName evidence="1">Glycyl-tRNA synthetase beta subunit</fullName>
        <shortName evidence="1">GlyRS</shortName>
    </alternativeName>
</protein>